<name>ISPH_ANADF</name>
<sequence>MEVKIAKTAGFCWGVRRTVDKVMEVADHASGPVVTLGPIIHNPQAVARFREKGVGTVDAVGEVGDGTTVVVRTHGAVKEELDRAEGRGLEVVDGTCPYVKYPQAIAQRLSAEGYHVVIVGDANHAEIKGVISYSEGPCTVVKPGGPIPEIPAKKVAVIAQTTCIGADFEAVVGALALRHKEVRAVNTICNDTEERQADARSLAREVDAVVVVGGKNSANTRHLAEICREIQPRTWHVETEAELRPEWFTGCQVVGLSAGASTPDWVVEGVAGWLRGLHRPGTP</sequence>
<gene>
    <name evidence="1" type="primary">ispH</name>
    <name type="ordered locus">Anae109_2302</name>
</gene>
<protein>
    <recommendedName>
        <fullName evidence="1">4-hydroxy-3-methylbut-2-enyl diphosphate reductase</fullName>
        <shortName evidence="1">HMBPP reductase</shortName>
        <ecNumber evidence="1">1.17.7.4</ecNumber>
    </recommendedName>
</protein>
<comment type="function">
    <text evidence="1">Catalyzes the conversion of 1-hydroxy-2-methyl-2-(E)-butenyl 4-diphosphate (HMBPP) into a mixture of isopentenyl diphosphate (IPP) and dimethylallyl diphosphate (DMAPP). Acts in the terminal step of the DOXP/MEP pathway for isoprenoid precursor biosynthesis.</text>
</comment>
<comment type="catalytic activity">
    <reaction evidence="1">
        <text>isopentenyl diphosphate + 2 oxidized [2Fe-2S]-[ferredoxin] + H2O = (2E)-4-hydroxy-3-methylbut-2-enyl diphosphate + 2 reduced [2Fe-2S]-[ferredoxin] + 2 H(+)</text>
        <dbReference type="Rhea" id="RHEA:24488"/>
        <dbReference type="Rhea" id="RHEA-COMP:10000"/>
        <dbReference type="Rhea" id="RHEA-COMP:10001"/>
        <dbReference type="ChEBI" id="CHEBI:15377"/>
        <dbReference type="ChEBI" id="CHEBI:15378"/>
        <dbReference type="ChEBI" id="CHEBI:33737"/>
        <dbReference type="ChEBI" id="CHEBI:33738"/>
        <dbReference type="ChEBI" id="CHEBI:128753"/>
        <dbReference type="ChEBI" id="CHEBI:128769"/>
        <dbReference type="EC" id="1.17.7.4"/>
    </reaction>
</comment>
<comment type="catalytic activity">
    <reaction evidence="1">
        <text>dimethylallyl diphosphate + 2 oxidized [2Fe-2S]-[ferredoxin] + H2O = (2E)-4-hydroxy-3-methylbut-2-enyl diphosphate + 2 reduced [2Fe-2S]-[ferredoxin] + 2 H(+)</text>
        <dbReference type="Rhea" id="RHEA:24825"/>
        <dbReference type="Rhea" id="RHEA-COMP:10000"/>
        <dbReference type="Rhea" id="RHEA-COMP:10001"/>
        <dbReference type="ChEBI" id="CHEBI:15377"/>
        <dbReference type="ChEBI" id="CHEBI:15378"/>
        <dbReference type="ChEBI" id="CHEBI:33737"/>
        <dbReference type="ChEBI" id="CHEBI:33738"/>
        <dbReference type="ChEBI" id="CHEBI:57623"/>
        <dbReference type="ChEBI" id="CHEBI:128753"/>
        <dbReference type="EC" id="1.17.7.4"/>
    </reaction>
</comment>
<comment type="cofactor">
    <cofactor evidence="1">
        <name>[4Fe-4S] cluster</name>
        <dbReference type="ChEBI" id="CHEBI:49883"/>
    </cofactor>
    <text evidence="1">Binds 1 [4Fe-4S] cluster per subunit.</text>
</comment>
<comment type="pathway">
    <text evidence="1">Isoprenoid biosynthesis; dimethylallyl diphosphate biosynthesis; dimethylallyl diphosphate from (2E)-4-hydroxy-3-methylbutenyl diphosphate: step 1/1.</text>
</comment>
<comment type="pathway">
    <text evidence="1">Isoprenoid biosynthesis; isopentenyl diphosphate biosynthesis via DXP pathway; isopentenyl diphosphate from 1-deoxy-D-xylulose 5-phosphate: step 6/6.</text>
</comment>
<comment type="similarity">
    <text evidence="1">Belongs to the IspH family.</text>
</comment>
<proteinExistence type="inferred from homology"/>
<organism>
    <name type="scientific">Anaeromyxobacter sp. (strain Fw109-5)</name>
    <dbReference type="NCBI Taxonomy" id="404589"/>
    <lineage>
        <taxon>Bacteria</taxon>
        <taxon>Pseudomonadati</taxon>
        <taxon>Myxococcota</taxon>
        <taxon>Myxococcia</taxon>
        <taxon>Myxococcales</taxon>
        <taxon>Cystobacterineae</taxon>
        <taxon>Anaeromyxobacteraceae</taxon>
        <taxon>Anaeromyxobacter</taxon>
    </lineage>
</organism>
<dbReference type="EC" id="1.17.7.4" evidence="1"/>
<dbReference type="EMBL" id="CP000769">
    <property type="protein sequence ID" value="ABS26504.1"/>
    <property type="molecule type" value="Genomic_DNA"/>
</dbReference>
<dbReference type="RefSeq" id="WP_012097090.1">
    <property type="nucleotide sequence ID" value="NC_009675.1"/>
</dbReference>
<dbReference type="SMR" id="A7HCQ8"/>
<dbReference type="STRING" id="404589.Anae109_2302"/>
<dbReference type="KEGG" id="afw:Anae109_2302"/>
<dbReference type="eggNOG" id="COG0761">
    <property type="taxonomic scope" value="Bacteria"/>
</dbReference>
<dbReference type="HOGENOM" id="CLU_027486_0_1_7"/>
<dbReference type="OrthoDB" id="9804068at2"/>
<dbReference type="UniPathway" id="UPA00056">
    <property type="reaction ID" value="UER00097"/>
</dbReference>
<dbReference type="UniPathway" id="UPA00059">
    <property type="reaction ID" value="UER00105"/>
</dbReference>
<dbReference type="Proteomes" id="UP000006382">
    <property type="component" value="Chromosome"/>
</dbReference>
<dbReference type="GO" id="GO:0051539">
    <property type="term" value="F:4 iron, 4 sulfur cluster binding"/>
    <property type="evidence" value="ECO:0007669"/>
    <property type="project" value="UniProtKB-UniRule"/>
</dbReference>
<dbReference type="GO" id="GO:0051745">
    <property type="term" value="F:4-hydroxy-3-methylbut-2-enyl diphosphate reductase activity"/>
    <property type="evidence" value="ECO:0007669"/>
    <property type="project" value="UniProtKB-UniRule"/>
</dbReference>
<dbReference type="GO" id="GO:0046872">
    <property type="term" value="F:metal ion binding"/>
    <property type="evidence" value="ECO:0007669"/>
    <property type="project" value="UniProtKB-KW"/>
</dbReference>
<dbReference type="GO" id="GO:0050992">
    <property type="term" value="P:dimethylallyl diphosphate biosynthetic process"/>
    <property type="evidence" value="ECO:0007669"/>
    <property type="project" value="UniProtKB-UniRule"/>
</dbReference>
<dbReference type="GO" id="GO:0019288">
    <property type="term" value="P:isopentenyl diphosphate biosynthetic process, methylerythritol 4-phosphate pathway"/>
    <property type="evidence" value="ECO:0007669"/>
    <property type="project" value="UniProtKB-UniRule"/>
</dbReference>
<dbReference type="GO" id="GO:0016114">
    <property type="term" value="P:terpenoid biosynthetic process"/>
    <property type="evidence" value="ECO:0007669"/>
    <property type="project" value="UniProtKB-UniRule"/>
</dbReference>
<dbReference type="CDD" id="cd13944">
    <property type="entry name" value="lytB_ispH"/>
    <property type="match status" value="1"/>
</dbReference>
<dbReference type="Gene3D" id="3.40.50.11270">
    <property type="match status" value="1"/>
</dbReference>
<dbReference type="Gene3D" id="3.40.1010.20">
    <property type="entry name" value="4-hydroxy-3-methylbut-2-enyl diphosphate reductase, catalytic domain"/>
    <property type="match status" value="2"/>
</dbReference>
<dbReference type="HAMAP" id="MF_00191">
    <property type="entry name" value="IspH"/>
    <property type="match status" value="1"/>
</dbReference>
<dbReference type="InterPro" id="IPR003451">
    <property type="entry name" value="LytB/IspH"/>
</dbReference>
<dbReference type="NCBIfam" id="TIGR00216">
    <property type="entry name" value="ispH_lytB"/>
    <property type="match status" value="1"/>
</dbReference>
<dbReference type="PANTHER" id="PTHR30426">
    <property type="entry name" value="4-HYDROXY-3-METHYLBUT-2-ENYL DIPHOSPHATE REDUCTASE"/>
    <property type="match status" value="1"/>
</dbReference>
<dbReference type="PANTHER" id="PTHR30426:SF0">
    <property type="entry name" value="4-HYDROXY-3-METHYLBUT-2-ENYL DIPHOSPHATE REDUCTASE"/>
    <property type="match status" value="1"/>
</dbReference>
<dbReference type="Pfam" id="PF02401">
    <property type="entry name" value="LYTB"/>
    <property type="match status" value="1"/>
</dbReference>
<feature type="chain" id="PRO_1000021083" description="4-hydroxy-3-methylbut-2-enyl diphosphate reductase">
    <location>
        <begin position="1"/>
        <end position="283"/>
    </location>
</feature>
<feature type="active site" description="Proton donor" evidence="1">
    <location>
        <position position="126"/>
    </location>
</feature>
<feature type="binding site" evidence="1">
    <location>
        <position position="12"/>
    </location>
    <ligand>
        <name>[4Fe-4S] cluster</name>
        <dbReference type="ChEBI" id="CHEBI:49883"/>
    </ligand>
</feature>
<feature type="binding site" evidence="1">
    <location>
        <position position="41"/>
    </location>
    <ligand>
        <name>(2E)-4-hydroxy-3-methylbut-2-enyl diphosphate</name>
        <dbReference type="ChEBI" id="CHEBI:128753"/>
    </ligand>
</feature>
<feature type="binding site" evidence="1">
    <location>
        <position position="41"/>
    </location>
    <ligand>
        <name>dimethylallyl diphosphate</name>
        <dbReference type="ChEBI" id="CHEBI:57623"/>
    </ligand>
</feature>
<feature type="binding site" evidence="1">
    <location>
        <position position="41"/>
    </location>
    <ligand>
        <name>isopentenyl diphosphate</name>
        <dbReference type="ChEBI" id="CHEBI:128769"/>
    </ligand>
</feature>
<feature type="binding site" evidence="1">
    <location>
        <position position="74"/>
    </location>
    <ligand>
        <name>(2E)-4-hydroxy-3-methylbut-2-enyl diphosphate</name>
        <dbReference type="ChEBI" id="CHEBI:128753"/>
    </ligand>
</feature>
<feature type="binding site" evidence="1">
    <location>
        <position position="74"/>
    </location>
    <ligand>
        <name>dimethylallyl diphosphate</name>
        <dbReference type="ChEBI" id="CHEBI:57623"/>
    </ligand>
</feature>
<feature type="binding site" evidence="1">
    <location>
        <position position="74"/>
    </location>
    <ligand>
        <name>isopentenyl diphosphate</name>
        <dbReference type="ChEBI" id="CHEBI:128769"/>
    </ligand>
</feature>
<feature type="binding site" evidence="1">
    <location>
        <position position="96"/>
    </location>
    <ligand>
        <name>[4Fe-4S] cluster</name>
        <dbReference type="ChEBI" id="CHEBI:49883"/>
    </ligand>
</feature>
<feature type="binding site" evidence="1">
    <location>
        <position position="124"/>
    </location>
    <ligand>
        <name>(2E)-4-hydroxy-3-methylbut-2-enyl diphosphate</name>
        <dbReference type="ChEBI" id="CHEBI:128753"/>
    </ligand>
</feature>
<feature type="binding site" evidence="1">
    <location>
        <position position="124"/>
    </location>
    <ligand>
        <name>dimethylallyl diphosphate</name>
        <dbReference type="ChEBI" id="CHEBI:57623"/>
    </ligand>
</feature>
<feature type="binding site" evidence="1">
    <location>
        <position position="124"/>
    </location>
    <ligand>
        <name>isopentenyl diphosphate</name>
        <dbReference type="ChEBI" id="CHEBI:128769"/>
    </ligand>
</feature>
<feature type="binding site" evidence="1">
    <location>
        <position position="161"/>
    </location>
    <ligand>
        <name>(2E)-4-hydroxy-3-methylbut-2-enyl diphosphate</name>
        <dbReference type="ChEBI" id="CHEBI:128753"/>
    </ligand>
</feature>
<feature type="binding site" evidence="1">
    <location>
        <position position="189"/>
    </location>
    <ligand>
        <name>[4Fe-4S] cluster</name>
        <dbReference type="ChEBI" id="CHEBI:49883"/>
    </ligand>
</feature>
<feature type="binding site" evidence="1">
    <location>
        <position position="217"/>
    </location>
    <ligand>
        <name>(2E)-4-hydroxy-3-methylbut-2-enyl diphosphate</name>
        <dbReference type="ChEBI" id="CHEBI:128753"/>
    </ligand>
</feature>
<feature type="binding site" evidence="1">
    <location>
        <position position="217"/>
    </location>
    <ligand>
        <name>dimethylallyl diphosphate</name>
        <dbReference type="ChEBI" id="CHEBI:57623"/>
    </ligand>
</feature>
<feature type="binding site" evidence="1">
    <location>
        <position position="217"/>
    </location>
    <ligand>
        <name>isopentenyl diphosphate</name>
        <dbReference type="ChEBI" id="CHEBI:128769"/>
    </ligand>
</feature>
<feature type="binding site" evidence="1">
    <location>
        <position position="219"/>
    </location>
    <ligand>
        <name>(2E)-4-hydroxy-3-methylbut-2-enyl diphosphate</name>
        <dbReference type="ChEBI" id="CHEBI:128753"/>
    </ligand>
</feature>
<feature type="binding site" evidence="1">
    <location>
        <position position="219"/>
    </location>
    <ligand>
        <name>dimethylallyl diphosphate</name>
        <dbReference type="ChEBI" id="CHEBI:57623"/>
    </ligand>
</feature>
<feature type="binding site" evidence="1">
    <location>
        <position position="219"/>
    </location>
    <ligand>
        <name>isopentenyl diphosphate</name>
        <dbReference type="ChEBI" id="CHEBI:128769"/>
    </ligand>
</feature>
<feature type="binding site" evidence="1">
    <location>
        <position position="261"/>
    </location>
    <ligand>
        <name>(2E)-4-hydroxy-3-methylbut-2-enyl diphosphate</name>
        <dbReference type="ChEBI" id="CHEBI:128753"/>
    </ligand>
</feature>
<feature type="binding site" evidence="1">
    <location>
        <position position="261"/>
    </location>
    <ligand>
        <name>dimethylallyl diphosphate</name>
        <dbReference type="ChEBI" id="CHEBI:57623"/>
    </ligand>
</feature>
<feature type="binding site" evidence="1">
    <location>
        <position position="261"/>
    </location>
    <ligand>
        <name>isopentenyl diphosphate</name>
        <dbReference type="ChEBI" id="CHEBI:128769"/>
    </ligand>
</feature>
<accession>A7HCQ8</accession>
<keyword id="KW-0004">4Fe-4S</keyword>
<keyword id="KW-0408">Iron</keyword>
<keyword id="KW-0411">Iron-sulfur</keyword>
<keyword id="KW-0414">Isoprene biosynthesis</keyword>
<keyword id="KW-0479">Metal-binding</keyword>
<keyword id="KW-0560">Oxidoreductase</keyword>
<keyword id="KW-1185">Reference proteome</keyword>
<evidence type="ECO:0000255" key="1">
    <source>
        <dbReference type="HAMAP-Rule" id="MF_00191"/>
    </source>
</evidence>
<reference key="1">
    <citation type="journal article" date="2015" name="Genome Announc.">
        <title>Complete genome sequence of Anaeromyxobacter sp. Fw109-5, an anaerobic, metal-reducing bacterium isolated from a contaminated subsurface environment.</title>
        <authorList>
            <person name="Hwang C."/>
            <person name="Copeland A."/>
            <person name="Lucas S."/>
            <person name="Lapidus A."/>
            <person name="Barry K."/>
            <person name="Glavina Del Rio T."/>
            <person name="Dalin E."/>
            <person name="Tice H."/>
            <person name="Pitluck S."/>
            <person name="Sims D."/>
            <person name="Brettin T."/>
            <person name="Bruce D.C."/>
            <person name="Detter J.C."/>
            <person name="Han C.S."/>
            <person name="Schmutz J."/>
            <person name="Larimer F.W."/>
            <person name="Land M.L."/>
            <person name="Hauser L.J."/>
            <person name="Kyrpides N."/>
            <person name="Lykidis A."/>
            <person name="Richardson P."/>
            <person name="Belieav A."/>
            <person name="Sanford R.A."/>
            <person name="Loeffler F.E."/>
            <person name="Fields M.W."/>
        </authorList>
    </citation>
    <scope>NUCLEOTIDE SEQUENCE [LARGE SCALE GENOMIC DNA]</scope>
    <source>
        <strain>Fw109-5</strain>
    </source>
</reference>